<gene>
    <name evidence="1" type="primary">gcvH</name>
    <name type="ordered locus">ECA0744</name>
</gene>
<name>GCSH_PECAS</name>
<evidence type="ECO:0000255" key="1">
    <source>
        <dbReference type="HAMAP-Rule" id="MF_00272"/>
    </source>
</evidence>
<evidence type="ECO:0000255" key="2">
    <source>
        <dbReference type="PROSITE-ProRule" id="PRU01066"/>
    </source>
</evidence>
<comment type="function">
    <text evidence="1">The glycine cleavage system catalyzes the degradation of glycine. The H protein shuttles the methylamine group of glycine from the P protein to the T protein.</text>
</comment>
<comment type="cofactor">
    <cofactor evidence="1">
        <name>(R)-lipoate</name>
        <dbReference type="ChEBI" id="CHEBI:83088"/>
    </cofactor>
    <text evidence="1">Binds 1 lipoyl cofactor covalently.</text>
</comment>
<comment type="subunit">
    <text evidence="1">The glycine cleavage system is composed of four proteins: P, T, L and H.</text>
</comment>
<comment type="similarity">
    <text evidence="1">Belongs to the GcvH family.</text>
</comment>
<protein>
    <recommendedName>
        <fullName evidence="1">Glycine cleavage system H protein</fullName>
    </recommendedName>
</protein>
<dbReference type="EMBL" id="BX950851">
    <property type="protein sequence ID" value="CAG73658.1"/>
    <property type="molecule type" value="Genomic_DNA"/>
</dbReference>
<dbReference type="RefSeq" id="WP_011092351.1">
    <property type="nucleotide sequence ID" value="NC_004547.2"/>
</dbReference>
<dbReference type="SMR" id="Q6D975"/>
<dbReference type="STRING" id="218491.ECA0744"/>
<dbReference type="GeneID" id="57207474"/>
<dbReference type="KEGG" id="eca:ECA0744"/>
<dbReference type="PATRIC" id="fig|218491.5.peg.742"/>
<dbReference type="eggNOG" id="COG0509">
    <property type="taxonomic scope" value="Bacteria"/>
</dbReference>
<dbReference type="HOGENOM" id="CLU_097408_2_1_6"/>
<dbReference type="OrthoDB" id="9796712at2"/>
<dbReference type="Proteomes" id="UP000007966">
    <property type="component" value="Chromosome"/>
</dbReference>
<dbReference type="GO" id="GO:0005829">
    <property type="term" value="C:cytosol"/>
    <property type="evidence" value="ECO:0007669"/>
    <property type="project" value="TreeGrafter"/>
</dbReference>
<dbReference type="GO" id="GO:0005960">
    <property type="term" value="C:glycine cleavage complex"/>
    <property type="evidence" value="ECO:0007669"/>
    <property type="project" value="InterPro"/>
</dbReference>
<dbReference type="GO" id="GO:0019464">
    <property type="term" value="P:glycine decarboxylation via glycine cleavage system"/>
    <property type="evidence" value="ECO:0007669"/>
    <property type="project" value="UniProtKB-UniRule"/>
</dbReference>
<dbReference type="CDD" id="cd06848">
    <property type="entry name" value="GCS_H"/>
    <property type="match status" value="1"/>
</dbReference>
<dbReference type="FunFam" id="2.40.50.100:FF:000011">
    <property type="entry name" value="Glycine cleavage system H protein"/>
    <property type="match status" value="1"/>
</dbReference>
<dbReference type="Gene3D" id="2.40.50.100">
    <property type="match status" value="1"/>
</dbReference>
<dbReference type="HAMAP" id="MF_00272">
    <property type="entry name" value="GcvH"/>
    <property type="match status" value="1"/>
</dbReference>
<dbReference type="InterPro" id="IPR003016">
    <property type="entry name" value="2-oxoA_DH_lipoyl-BS"/>
</dbReference>
<dbReference type="InterPro" id="IPR000089">
    <property type="entry name" value="Biotin_lipoyl"/>
</dbReference>
<dbReference type="InterPro" id="IPR002930">
    <property type="entry name" value="GCV_H"/>
</dbReference>
<dbReference type="InterPro" id="IPR033753">
    <property type="entry name" value="GCV_H/Fam206"/>
</dbReference>
<dbReference type="InterPro" id="IPR017453">
    <property type="entry name" value="GCV_H_sub"/>
</dbReference>
<dbReference type="InterPro" id="IPR011053">
    <property type="entry name" value="Single_hybrid_motif"/>
</dbReference>
<dbReference type="NCBIfam" id="TIGR00527">
    <property type="entry name" value="gcvH"/>
    <property type="match status" value="1"/>
</dbReference>
<dbReference type="NCBIfam" id="NF002270">
    <property type="entry name" value="PRK01202.1"/>
    <property type="match status" value="1"/>
</dbReference>
<dbReference type="PANTHER" id="PTHR11715">
    <property type="entry name" value="GLYCINE CLEAVAGE SYSTEM H PROTEIN"/>
    <property type="match status" value="1"/>
</dbReference>
<dbReference type="PANTHER" id="PTHR11715:SF3">
    <property type="entry name" value="GLYCINE CLEAVAGE SYSTEM H PROTEIN-RELATED"/>
    <property type="match status" value="1"/>
</dbReference>
<dbReference type="Pfam" id="PF01597">
    <property type="entry name" value="GCV_H"/>
    <property type="match status" value="1"/>
</dbReference>
<dbReference type="SUPFAM" id="SSF51230">
    <property type="entry name" value="Single hybrid motif"/>
    <property type="match status" value="1"/>
</dbReference>
<dbReference type="PROSITE" id="PS50968">
    <property type="entry name" value="BIOTINYL_LIPOYL"/>
    <property type="match status" value="1"/>
</dbReference>
<dbReference type="PROSITE" id="PS00189">
    <property type="entry name" value="LIPOYL"/>
    <property type="match status" value="1"/>
</dbReference>
<sequence length="130" mass="14105">MSNVPTELKYATSHEWVLHEGDGIYSVGITEHAQELLGDMVFIDLPEVGTVVAAGDDCAVAESVKAASDIYAPISGEVVEVNEDLENSPELVNSAPYTDGWLFRIKISDESDLDELLDAEGYQASLEEDE</sequence>
<reference key="1">
    <citation type="journal article" date="2004" name="Proc. Natl. Acad. Sci. U.S.A.">
        <title>Genome sequence of the enterobacterial phytopathogen Erwinia carotovora subsp. atroseptica and characterization of virulence factors.</title>
        <authorList>
            <person name="Bell K.S."/>
            <person name="Sebaihia M."/>
            <person name="Pritchard L."/>
            <person name="Holden M.T.G."/>
            <person name="Hyman L.J."/>
            <person name="Holeva M.C."/>
            <person name="Thomson N.R."/>
            <person name="Bentley S.D."/>
            <person name="Churcher L.J.C."/>
            <person name="Mungall K."/>
            <person name="Atkin R."/>
            <person name="Bason N."/>
            <person name="Brooks K."/>
            <person name="Chillingworth T."/>
            <person name="Clark K."/>
            <person name="Doggett J."/>
            <person name="Fraser A."/>
            <person name="Hance Z."/>
            <person name="Hauser H."/>
            <person name="Jagels K."/>
            <person name="Moule S."/>
            <person name="Norbertczak H."/>
            <person name="Ormond D."/>
            <person name="Price C."/>
            <person name="Quail M.A."/>
            <person name="Sanders M."/>
            <person name="Walker D."/>
            <person name="Whitehead S."/>
            <person name="Salmond G.P.C."/>
            <person name="Birch P.R.J."/>
            <person name="Parkhill J."/>
            <person name="Toth I.K."/>
        </authorList>
    </citation>
    <scope>NUCLEOTIDE SEQUENCE [LARGE SCALE GENOMIC DNA]</scope>
    <source>
        <strain>SCRI 1043 / ATCC BAA-672</strain>
    </source>
</reference>
<accession>Q6D975</accession>
<organism>
    <name type="scientific">Pectobacterium atrosepticum (strain SCRI 1043 / ATCC BAA-672)</name>
    <name type="common">Erwinia carotovora subsp. atroseptica</name>
    <dbReference type="NCBI Taxonomy" id="218491"/>
    <lineage>
        <taxon>Bacteria</taxon>
        <taxon>Pseudomonadati</taxon>
        <taxon>Pseudomonadota</taxon>
        <taxon>Gammaproteobacteria</taxon>
        <taxon>Enterobacterales</taxon>
        <taxon>Pectobacteriaceae</taxon>
        <taxon>Pectobacterium</taxon>
    </lineage>
</organism>
<keyword id="KW-0450">Lipoyl</keyword>
<keyword id="KW-1185">Reference proteome</keyword>
<proteinExistence type="inferred from homology"/>
<feature type="chain" id="PRO_0000302374" description="Glycine cleavage system H protein">
    <location>
        <begin position="1"/>
        <end position="130"/>
    </location>
</feature>
<feature type="domain" description="Lipoyl-binding" evidence="2">
    <location>
        <begin position="24"/>
        <end position="106"/>
    </location>
</feature>
<feature type="modified residue" description="N6-lipoyllysine" evidence="1">
    <location>
        <position position="65"/>
    </location>
</feature>